<reference key="1">
    <citation type="journal article" date="2002" name="J. Immunol.">
        <title>NK cell receptors of the orangutan (Pongo pygmaeus): a pivotal species for tracking the coevolution of killer cell Ig-like receptors with MHC-C.</title>
        <authorList>
            <person name="Guethlein L.A."/>
            <person name="Flodin L.R."/>
            <person name="Adams E.J."/>
            <person name="Parham P."/>
        </authorList>
    </citation>
    <scope>NUCLEOTIDE SEQUENCE [MRNA]</scope>
    <scope>VARIANT ILE-61</scope>
</reference>
<name>NKG2D_PONPY</name>
<comment type="function">
    <text evidence="1">Functions as an activating and costimulatory receptor involved in immunosurveillance upon binding to various cellular stress-inducible ligands displayed at the surface of autologous tumor cells and virus-infected cells. Provides both stimulatory and costimulatory innate immune responses on activated killer (NK) cells, leading to cytotoxic activity. Acts as a costimulatory receptor for T-cell receptor (TCR) in CD8(+) T-cell-mediated adaptive immune responses by amplifying T-cell activation. Stimulates perforin-mediated elimination of ligand-expressing tumor cells. Signaling involves calcium influx, culminating in the expression of TNF-alpha. Participates in NK cell-mediated bone marrow graft rejection. May play a regulatory role in differentiation and survival of NK cells. Binds to ligands belonging to various subfamilies of MHC class I-related glycoproteins (By similarity).</text>
</comment>
<comment type="subunit">
    <text evidence="1 2">Homodimer; disulfide-linked. Heterohexamer composed of two subunits of KLRK1 and four subunits of HCST/DAP10. Interacts (via transmembrane domain) with HCST/DAP10 (via transmembrane domain); the interaction is required for KLRK1 NK cell surface and induces NK cell-mediated cytotoxicity. Can form disulfide-bonded heterodimer with CD94 (By similarity). Interacts with CEACAM1; recruits PTPN6 that dephosphorylates VAV1 (By similarity).</text>
</comment>
<comment type="subcellular location">
    <subcellularLocation>
        <location evidence="1">Cell membrane</location>
        <topology evidence="1">Single-pass type II membrane protein</topology>
    </subcellularLocation>
    <text evidence="1">Colocalized with HCST on the cell surface.</text>
</comment>
<comment type="miscellaneous">
    <text evidence="1">Is not capable of signal transduction by itself, but operates through the adapter protein HCST.</text>
</comment>
<evidence type="ECO:0000250" key="1"/>
<evidence type="ECO:0000250" key="2">
    <source>
        <dbReference type="UniProtKB" id="P26718"/>
    </source>
</evidence>
<evidence type="ECO:0000255" key="3"/>
<evidence type="ECO:0000255" key="4">
    <source>
        <dbReference type="PROSITE-ProRule" id="PRU00040"/>
    </source>
</evidence>
<evidence type="ECO:0000269" key="5">
    <source>
    </source>
</evidence>
<organism>
    <name type="scientific">Pongo pygmaeus</name>
    <name type="common">Bornean orangutan</name>
    <dbReference type="NCBI Taxonomy" id="9600"/>
    <lineage>
        <taxon>Eukaryota</taxon>
        <taxon>Metazoa</taxon>
        <taxon>Chordata</taxon>
        <taxon>Craniata</taxon>
        <taxon>Vertebrata</taxon>
        <taxon>Euteleostomi</taxon>
        <taxon>Mammalia</taxon>
        <taxon>Eutheria</taxon>
        <taxon>Euarchontoglires</taxon>
        <taxon>Primates</taxon>
        <taxon>Haplorrhini</taxon>
        <taxon>Catarrhini</taxon>
        <taxon>Hominidae</taxon>
        <taxon>Pongo</taxon>
    </lineage>
</organism>
<keyword id="KW-1064">Adaptive immunity</keyword>
<keyword id="KW-1003">Cell membrane</keyword>
<keyword id="KW-0221">Differentiation</keyword>
<keyword id="KW-1015">Disulfide bond</keyword>
<keyword id="KW-0325">Glycoprotein</keyword>
<keyword id="KW-0391">Immunity</keyword>
<keyword id="KW-0399">Innate immunity</keyword>
<keyword id="KW-0430">Lectin</keyword>
<keyword id="KW-0472">Membrane</keyword>
<keyword id="KW-0675">Receptor</keyword>
<keyword id="KW-0735">Signal-anchor</keyword>
<keyword id="KW-0812">Transmembrane</keyword>
<keyword id="KW-1133">Transmembrane helix</keyword>
<sequence length="216" mass="25211">MGWIRGRRSRHSWEMSEFHNYNLDLAKNDFSTRWQKQRCPVIKSKCRENTSPLFFCCFIAVAMGIRFIVMVTIWSAVFLNSLFNQEVQIPLTGSYCGPCPKNWICYKNNCYQFFNESKNWYESQASCMSQNASLLKVYSKEDQDLLKLVKSYHWMGLIHIPTNGSWQWEDGSILSPNLLTIIEMQKGDCALYASSFKGYIENCSTPNTYICMQRTV</sequence>
<gene>
    <name type="primary">KLRK1</name>
    <name type="synonym">NKG2D</name>
</gene>
<proteinExistence type="evidence at transcript level"/>
<accession>Q8MJH1</accession>
<accession>Q8MJH0</accession>
<protein>
    <recommendedName>
        <fullName>NKG2-D type II integral membrane protein</fullName>
    </recommendedName>
    <alternativeName>
        <fullName>Killer cell lectin-like receptor subfamily K member 1</fullName>
    </alternativeName>
    <alternativeName>
        <fullName>NK cell receptor D</fullName>
    </alternativeName>
    <alternativeName>
        <fullName>NKG2-D-activating NK receptor</fullName>
    </alternativeName>
    <cdAntigenName>CD314</cdAntigenName>
</protein>
<dbReference type="EMBL" id="AF470403">
    <property type="protein sequence ID" value="AAM78503.1"/>
    <property type="molecule type" value="mRNA"/>
</dbReference>
<dbReference type="EMBL" id="AF470404">
    <property type="protein sequence ID" value="AAM78504.1"/>
    <property type="molecule type" value="mRNA"/>
</dbReference>
<dbReference type="SMR" id="Q8MJH1"/>
<dbReference type="GlyCosmos" id="Q8MJH1">
    <property type="glycosylation" value="4 sites, No reported glycans"/>
</dbReference>
<dbReference type="GO" id="GO:0009986">
    <property type="term" value="C:cell surface"/>
    <property type="evidence" value="ECO:0000250"/>
    <property type="project" value="UniProtKB"/>
</dbReference>
<dbReference type="GO" id="GO:0009897">
    <property type="term" value="C:external side of plasma membrane"/>
    <property type="evidence" value="ECO:0007669"/>
    <property type="project" value="TreeGrafter"/>
</dbReference>
<dbReference type="GO" id="GO:0030246">
    <property type="term" value="F:carbohydrate binding"/>
    <property type="evidence" value="ECO:0007669"/>
    <property type="project" value="UniProtKB-KW"/>
</dbReference>
<dbReference type="GO" id="GO:0038023">
    <property type="term" value="F:signaling receptor activity"/>
    <property type="evidence" value="ECO:0007669"/>
    <property type="project" value="TreeGrafter"/>
</dbReference>
<dbReference type="GO" id="GO:0002250">
    <property type="term" value="P:adaptive immune response"/>
    <property type="evidence" value="ECO:0007669"/>
    <property type="project" value="UniProtKB-KW"/>
</dbReference>
<dbReference type="GO" id="GO:0030154">
    <property type="term" value="P:cell differentiation"/>
    <property type="evidence" value="ECO:0007669"/>
    <property type="project" value="UniProtKB-KW"/>
</dbReference>
<dbReference type="GO" id="GO:0045087">
    <property type="term" value="P:innate immune response"/>
    <property type="evidence" value="ECO:0007669"/>
    <property type="project" value="UniProtKB-KW"/>
</dbReference>
<dbReference type="GO" id="GO:0045954">
    <property type="term" value="P:positive regulation of natural killer cell mediated cytotoxicity"/>
    <property type="evidence" value="ECO:0000250"/>
    <property type="project" value="UniProtKB"/>
</dbReference>
<dbReference type="CDD" id="cd03593">
    <property type="entry name" value="CLECT_NK_receptors_like"/>
    <property type="match status" value="1"/>
</dbReference>
<dbReference type="FunFam" id="3.10.100.10:FF:000055">
    <property type="entry name" value="NKG2-D type II integral membrane protein"/>
    <property type="match status" value="1"/>
</dbReference>
<dbReference type="Gene3D" id="3.10.100.10">
    <property type="entry name" value="Mannose-Binding Protein A, subunit A"/>
    <property type="match status" value="1"/>
</dbReference>
<dbReference type="InterPro" id="IPR001304">
    <property type="entry name" value="C-type_lectin-like"/>
</dbReference>
<dbReference type="InterPro" id="IPR016186">
    <property type="entry name" value="C-type_lectin-like/link_sf"/>
</dbReference>
<dbReference type="InterPro" id="IPR016187">
    <property type="entry name" value="CTDL_fold"/>
</dbReference>
<dbReference type="InterPro" id="IPR042169">
    <property type="entry name" value="NKG2D"/>
</dbReference>
<dbReference type="InterPro" id="IPR033992">
    <property type="entry name" value="NKR-like_CTLD"/>
</dbReference>
<dbReference type="PANTHER" id="PTHR47494">
    <property type="entry name" value="NKG2-D TYPE II INTEGRAL MEMBRANE PROTEIN"/>
    <property type="match status" value="1"/>
</dbReference>
<dbReference type="PANTHER" id="PTHR47494:SF1">
    <property type="entry name" value="NKG2-D TYPE II INTEGRAL MEMBRANE PROTEIN"/>
    <property type="match status" value="1"/>
</dbReference>
<dbReference type="Pfam" id="PF00059">
    <property type="entry name" value="Lectin_C"/>
    <property type="match status" value="1"/>
</dbReference>
<dbReference type="SMART" id="SM00034">
    <property type="entry name" value="CLECT"/>
    <property type="match status" value="1"/>
</dbReference>
<dbReference type="SUPFAM" id="SSF56436">
    <property type="entry name" value="C-type lectin-like"/>
    <property type="match status" value="1"/>
</dbReference>
<dbReference type="PROSITE" id="PS50041">
    <property type="entry name" value="C_TYPE_LECTIN_2"/>
    <property type="match status" value="1"/>
</dbReference>
<feature type="chain" id="PRO_0000274560" description="NKG2-D type II integral membrane protein">
    <location>
        <begin position="1"/>
        <end position="216"/>
    </location>
</feature>
<feature type="topological domain" description="Cytoplasmic" evidence="3">
    <location>
        <begin position="1"/>
        <end position="51"/>
    </location>
</feature>
<feature type="transmembrane region" description="Helical; Signal-anchor for type II membrane protein" evidence="3">
    <location>
        <begin position="52"/>
        <end position="72"/>
    </location>
</feature>
<feature type="topological domain" description="Extracellular" evidence="3">
    <location>
        <begin position="73"/>
        <end position="216"/>
    </location>
</feature>
<feature type="domain" description="C-type lectin" evidence="4">
    <location>
        <begin position="98"/>
        <end position="213"/>
    </location>
</feature>
<feature type="glycosylation site" description="N-linked (GlcNAc...) asparagine" evidence="3">
    <location>
        <position position="115"/>
    </location>
</feature>
<feature type="glycosylation site" description="N-linked (GlcNAc...) asparagine" evidence="3">
    <location>
        <position position="131"/>
    </location>
</feature>
<feature type="glycosylation site" description="N-linked (GlcNAc...) asparagine" evidence="3">
    <location>
        <position position="163"/>
    </location>
</feature>
<feature type="glycosylation site" description="N-linked (GlcNAc...) asparagine" evidence="3">
    <location>
        <position position="202"/>
    </location>
</feature>
<feature type="disulfide bond" evidence="4">
    <location>
        <begin position="96"/>
        <end position="105"/>
    </location>
</feature>
<feature type="disulfide bond" evidence="4">
    <location>
        <begin position="99"/>
        <end position="110"/>
    </location>
</feature>
<feature type="disulfide bond" evidence="4">
    <location>
        <begin position="127"/>
        <end position="211"/>
    </location>
</feature>
<feature type="disulfide bond" evidence="4">
    <location>
        <begin position="189"/>
        <end position="203"/>
    </location>
</feature>
<feature type="sequence variant" id="VAR_030319" description="In allele NKG2-D*02." evidence="5">
    <original>V</original>
    <variation>I</variation>
    <location>
        <position position="61"/>
    </location>
</feature>